<evidence type="ECO:0000255" key="1">
    <source>
        <dbReference type="HAMAP-Rule" id="MF_00086"/>
    </source>
</evidence>
<keyword id="KW-0067">ATP-binding</keyword>
<keyword id="KW-0963">Cytoplasm</keyword>
<keyword id="KW-0460">Magnesium</keyword>
<keyword id="KW-0479">Metal-binding</keyword>
<keyword id="KW-0547">Nucleotide-binding</keyword>
<keyword id="KW-0554">One-carbon metabolism</keyword>
<keyword id="KW-0630">Potassium</keyword>
<keyword id="KW-0808">Transferase</keyword>
<accession>A5WA00</accession>
<feature type="chain" id="PRO_1000007951" description="S-adenosylmethionine synthase">
    <location>
        <begin position="1"/>
        <end position="396"/>
    </location>
</feature>
<feature type="region of interest" description="Flexible loop" evidence="1">
    <location>
        <begin position="100"/>
        <end position="110"/>
    </location>
</feature>
<feature type="binding site" description="in other chain" evidence="1">
    <location>
        <position position="16"/>
    </location>
    <ligand>
        <name>ATP</name>
        <dbReference type="ChEBI" id="CHEBI:30616"/>
        <note>ligand shared between two neighboring subunits</note>
    </ligand>
</feature>
<feature type="binding site" evidence="1">
    <location>
        <position position="18"/>
    </location>
    <ligand>
        <name>Mg(2+)</name>
        <dbReference type="ChEBI" id="CHEBI:18420"/>
    </ligand>
</feature>
<feature type="binding site" evidence="1">
    <location>
        <position position="44"/>
    </location>
    <ligand>
        <name>K(+)</name>
        <dbReference type="ChEBI" id="CHEBI:29103"/>
    </ligand>
</feature>
<feature type="binding site" description="in other chain" evidence="1">
    <location>
        <position position="57"/>
    </location>
    <ligand>
        <name>L-methionine</name>
        <dbReference type="ChEBI" id="CHEBI:57844"/>
        <note>ligand shared between two neighboring subunits</note>
    </ligand>
</feature>
<feature type="binding site" description="in other chain" evidence="1">
    <location>
        <position position="100"/>
    </location>
    <ligand>
        <name>L-methionine</name>
        <dbReference type="ChEBI" id="CHEBI:57844"/>
        <note>ligand shared between two neighboring subunits</note>
    </ligand>
</feature>
<feature type="binding site" description="in other chain" evidence="1">
    <location>
        <begin position="165"/>
        <end position="167"/>
    </location>
    <ligand>
        <name>ATP</name>
        <dbReference type="ChEBI" id="CHEBI:30616"/>
        <note>ligand shared between two neighboring subunits</note>
    </ligand>
</feature>
<feature type="binding site" evidence="1">
    <location>
        <position position="240"/>
    </location>
    <ligand>
        <name>ATP</name>
        <dbReference type="ChEBI" id="CHEBI:30616"/>
        <note>ligand shared between two neighboring subunits</note>
    </ligand>
</feature>
<feature type="binding site" evidence="1">
    <location>
        <position position="240"/>
    </location>
    <ligand>
        <name>L-methionine</name>
        <dbReference type="ChEBI" id="CHEBI:57844"/>
        <note>ligand shared between two neighboring subunits</note>
    </ligand>
</feature>
<feature type="binding site" description="in other chain" evidence="1">
    <location>
        <begin position="246"/>
        <end position="247"/>
    </location>
    <ligand>
        <name>ATP</name>
        <dbReference type="ChEBI" id="CHEBI:30616"/>
        <note>ligand shared between two neighboring subunits</note>
    </ligand>
</feature>
<feature type="binding site" evidence="1">
    <location>
        <position position="263"/>
    </location>
    <ligand>
        <name>ATP</name>
        <dbReference type="ChEBI" id="CHEBI:30616"/>
        <note>ligand shared between two neighboring subunits</note>
    </ligand>
</feature>
<feature type="binding site" evidence="1">
    <location>
        <position position="267"/>
    </location>
    <ligand>
        <name>ATP</name>
        <dbReference type="ChEBI" id="CHEBI:30616"/>
        <note>ligand shared between two neighboring subunits</note>
    </ligand>
</feature>
<feature type="binding site" description="in other chain" evidence="1">
    <location>
        <position position="271"/>
    </location>
    <ligand>
        <name>L-methionine</name>
        <dbReference type="ChEBI" id="CHEBI:57844"/>
        <note>ligand shared between two neighboring subunits</note>
    </ligand>
</feature>
<name>METK_PSEP1</name>
<proteinExistence type="inferred from homology"/>
<organism>
    <name type="scientific">Pseudomonas putida (strain ATCC 700007 / DSM 6899 / JCM 31910 / BCRC 17059 / LMG 24140 / F1)</name>
    <dbReference type="NCBI Taxonomy" id="351746"/>
    <lineage>
        <taxon>Bacteria</taxon>
        <taxon>Pseudomonadati</taxon>
        <taxon>Pseudomonadota</taxon>
        <taxon>Gammaproteobacteria</taxon>
        <taxon>Pseudomonadales</taxon>
        <taxon>Pseudomonadaceae</taxon>
        <taxon>Pseudomonas</taxon>
    </lineage>
</organism>
<gene>
    <name evidence="1" type="primary">metK</name>
    <name type="ordered locus">Pput_4840</name>
</gene>
<sequence length="396" mass="42779">MSEYSLFTSESVSEGHPDKIADQISDAVLDAIIAQDKYARVACETLVKTGVAIIAGEVTTSAWVDLEDLVRKVIIDIGYNSSDVGFDGATCAVMNIIGKQSVDIAQGVDRSKPEDQGAGDQGLMFGYASNETEVLMPAPICFSHRLVERQAEARKSGLLPWLRPDAKSQVTCRYENGKVVGIDAVVLSTQHNPEVSQKDLQEAVMELIVKHTLPAELLHKGTQYHINPTGNFIIGGPVGDCGLTGRKIIVDSYGGMARHGGGAFSGKDPSKVDRSAAYAGRYVAKNIVAAGLAERCEIQVSYAIGVAQPTSISINTFGTGKVSDDKIIQLVRECFDLRPYAITTMLDLLHPMYQETAAYGHFGRTPQQKTVGDDTFTTFTWERTDRAQSLRDAAGL</sequence>
<protein>
    <recommendedName>
        <fullName evidence="1">S-adenosylmethionine synthase</fullName>
        <shortName evidence="1">AdoMet synthase</shortName>
        <ecNumber evidence="1">2.5.1.6</ecNumber>
    </recommendedName>
    <alternativeName>
        <fullName evidence="1">MAT</fullName>
    </alternativeName>
    <alternativeName>
        <fullName evidence="1">Methionine adenosyltransferase</fullName>
    </alternativeName>
</protein>
<reference key="1">
    <citation type="submission" date="2007-05" db="EMBL/GenBank/DDBJ databases">
        <title>Complete sequence of Pseudomonas putida F1.</title>
        <authorList>
            <consortium name="US DOE Joint Genome Institute"/>
            <person name="Copeland A."/>
            <person name="Lucas S."/>
            <person name="Lapidus A."/>
            <person name="Barry K."/>
            <person name="Detter J.C."/>
            <person name="Glavina del Rio T."/>
            <person name="Hammon N."/>
            <person name="Israni S."/>
            <person name="Dalin E."/>
            <person name="Tice H."/>
            <person name="Pitluck S."/>
            <person name="Chain P."/>
            <person name="Malfatti S."/>
            <person name="Shin M."/>
            <person name="Vergez L."/>
            <person name="Schmutz J."/>
            <person name="Larimer F."/>
            <person name="Land M."/>
            <person name="Hauser L."/>
            <person name="Kyrpides N."/>
            <person name="Lykidis A."/>
            <person name="Parales R."/>
            <person name="Richardson P."/>
        </authorList>
    </citation>
    <scope>NUCLEOTIDE SEQUENCE [LARGE SCALE GENOMIC DNA]</scope>
    <source>
        <strain>ATCC 700007 / DSM 6899 / JCM 31910 / BCRC 17059 / LMG 24140 / F1</strain>
    </source>
</reference>
<comment type="function">
    <text evidence="1">Catalyzes the formation of S-adenosylmethionine (AdoMet) from methionine and ATP. The overall synthetic reaction is composed of two sequential steps, AdoMet formation and the subsequent tripolyphosphate hydrolysis which occurs prior to release of AdoMet from the enzyme.</text>
</comment>
<comment type="catalytic activity">
    <reaction evidence="1">
        <text>L-methionine + ATP + H2O = S-adenosyl-L-methionine + phosphate + diphosphate</text>
        <dbReference type="Rhea" id="RHEA:21080"/>
        <dbReference type="ChEBI" id="CHEBI:15377"/>
        <dbReference type="ChEBI" id="CHEBI:30616"/>
        <dbReference type="ChEBI" id="CHEBI:33019"/>
        <dbReference type="ChEBI" id="CHEBI:43474"/>
        <dbReference type="ChEBI" id="CHEBI:57844"/>
        <dbReference type="ChEBI" id="CHEBI:59789"/>
        <dbReference type="EC" id="2.5.1.6"/>
    </reaction>
</comment>
<comment type="cofactor">
    <cofactor evidence="1">
        <name>Mg(2+)</name>
        <dbReference type="ChEBI" id="CHEBI:18420"/>
    </cofactor>
    <text evidence="1">Binds 2 divalent ions per subunit.</text>
</comment>
<comment type="cofactor">
    <cofactor evidence="1">
        <name>K(+)</name>
        <dbReference type="ChEBI" id="CHEBI:29103"/>
    </cofactor>
    <text evidence="1">Binds 1 potassium ion per subunit.</text>
</comment>
<comment type="pathway">
    <text evidence="1">Amino-acid biosynthesis; S-adenosyl-L-methionine biosynthesis; S-adenosyl-L-methionine from L-methionine: step 1/1.</text>
</comment>
<comment type="subunit">
    <text evidence="1">Homotetramer; dimer of dimers.</text>
</comment>
<comment type="subcellular location">
    <subcellularLocation>
        <location evidence="1">Cytoplasm</location>
    </subcellularLocation>
</comment>
<comment type="similarity">
    <text evidence="1">Belongs to the AdoMet synthase family.</text>
</comment>
<dbReference type="EC" id="2.5.1.6" evidence="1"/>
<dbReference type="EMBL" id="CP000712">
    <property type="protein sequence ID" value="ABQ80960.1"/>
    <property type="molecule type" value="Genomic_DNA"/>
</dbReference>
<dbReference type="SMR" id="A5WA00"/>
<dbReference type="KEGG" id="ppf:Pput_4840"/>
<dbReference type="eggNOG" id="COG0192">
    <property type="taxonomic scope" value="Bacteria"/>
</dbReference>
<dbReference type="HOGENOM" id="CLU_041802_1_1_6"/>
<dbReference type="UniPathway" id="UPA00315">
    <property type="reaction ID" value="UER00080"/>
</dbReference>
<dbReference type="GO" id="GO:0005737">
    <property type="term" value="C:cytoplasm"/>
    <property type="evidence" value="ECO:0007669"/>
    <property type="project" value="UniProtKB-SubCell"/>
</dbReference>
<dbReference type="GO" id="GO:0005524">
    <property type="term" value="F:ATP binding"/>
    <property type="evidence" value="ECO:0007669"/>
    <property type="project" value="UniProtKB-UniRule"/>
</dbReference>
<dbReference type="GO" id="GO:0000287">
    <property type="term" value="F:magnesium ion binding"/>
    <property type="evidence" value="ECO:0007669"/>
    <property type="project" value="UniProtKB-UniRule"/>
</dbReference>
<dbReference type="GO" id="GO:0004478">
    <property type="term" value="F:methionine adenosyltransferase activity"/>
    <property type="evidence" value="ECO:0007669"/>
    <property type="project" value="UniProtKB-UniRule"/>
</dbReference>
<dbReference type="GO" id="GO:0006730">
    <property type="term" value="P:one-carbon metabolic process"/>
    <property type="evidence" value="ECO:0007669"/>
    <property type="project" value="UniProtKB-KW"/>
</dbReference>
<dbReference type="GO" id="GO:0006556">
    <property type="term" value="P:S-adenosylmethionine biosynthetic process"/>
    <property type="evidence" value="ECO:0007669"/>
    <property type="project" value="UniProtKB-UniRule"/>
</dbReference>
<dbReference type="CDD" id="cd18079">
    <property type="entry name" value="S-AdoMet_synt"/>
    <property type="match status" value="1"/>
</dbReference>
<dbReference type="FunFam" id="3.30.300.10:FF:000003">
    <property type="entry name" value="S-adenosylmethionine synthase"/>
    <property type="match status" value="1"/>
</dbReference>
<dbReference type="Gene3D" id="3.30.300.10">
    <property type="match status" value="3"/>
</dbReference>
<dbReference type="HAMAP" id="MF_00086">
    <property type="entry name" value="S_AdoMet_synth1"/>
    <property type="match status" value="1"/>
</dbReference>
<dbReference type="InterPro" id="IPR022631">
    <property type="entry name" value="ADOMET_SYNTHASE_CS"/>
</dbReference>
<dbReference type="InterPro" id="IPR022630">
    <property type="entry name" value="S-AdoMet_synt_C"/>
</dbReference>
<dbReference type="InterPro" id="IPR022629">
    <property type="entry name" value="S-AdoMet_synt_central"/>
</dbReference>
<dbReference type="InterPro" id="IPR022628">
    <property type="entry name" value="S-AdoMet_synt_N"/>
</dbReference>
<dbReference type="InterPro" id="IPR002133">
    <property type="entry name" value="S-AdoMet_synthetase"/>
</dbReference>
<dbReference type="InterPro" id="IPR022636">
    <property type="entry name" value="S-AdoMet_synthetase_sfam"/>
</dbReference>
<dbReference type="NCBIfam" id="TIGR01034">
    <property type="entry name" value="metK"/>
    <property type="match status" value="1"/>
</dbReference>
<dbReference type="PANTHER" id="PTHR11964">
    <property type="entry name" value="S-ADENOSYLMETHIONINE SYNTHETASE"/>
    <property type="match status" value="1"/>
</dbReference>
<dbReference type="Pfam" id="PF02773">
    <property type="entry name" value="S-AdoMet_synt_C"/>
    <property type="match status" value="1"/>
</dbReference>
<dbReference type="Pfam" id="PF02772">
    <property type="entry name" value="S-AdoMet_synt_M"/>
    <property type="match status" value="1"/>
</dbReference>
<dbReference type="Pfam" id="PF00438">
    <property type="entry name" value="S-AdoMet_synt_N"/>
    <property type="match status" value="1"/>
</dbReference>
<dbReference type="PIRSF" id="PIRSF000497">
    <property type="entry name" value="MAT"/>
    <property type="match status" value="1"/>
</dbReference>
<dbReference type="SUPFAM" id="SSF55973">
    <property type="entry name" value="S-adenosylmethionine synthetase"/>
    <property type="match status" value="3"/>
</dbReference>
<dbReference type="PROSITE" id="PS00376">
    <property type="entry name" value="ADOMET_SYNTHASE_1"/>
    <property type="match status" value="1"/>
</dbReference>
<dbReference type="PROSITE" id="PS00377">
    <property type="entry name" value="ADOMET_SYNTHASE_2"/>
    <property type="match status" value="1"/>
</dbReference>